<sequence length="271" mass="29987">MQFPHPGPAAAPAVGVPLYAPTPLLQPAHPTPFYIDDILGRGPAAPTPTPTLPSPNSSFTSLVSSYRTPVYEPTPVHPAFSHHPAAALAAAYGPSGFGGPLYPFPRTVNDYTHALLRHDPLGKPLLWSPFLQRPLHKRKGGQVRFSNDQTVELEKKFETQKYLSPPERKRLAKMLQLSERQVKTWFQNRRAKWRRLKQENPQSNKKDALDSLDTSCEQGQDLPSEQNKGASLDRSQCSPSPASQEDPDSEISEDSDQEVDIEGDKGYFNAG</sequence>
<evidence type="ECO:0000250" key="1">
    <source>
        <dbReference type="UniProtKB" id="Q03014"/>
    </source>
</evidence>
<evidence type="ECO:0000255" key="2">
    <source>
        <dbReference type="PROSITE-ProRule" id="PRU00108"/>
    </source>
</evidence>
<evidence type="ECO:0000256" key="3">
    <source>
        <dbReference type="SAM" id="MobiDB-lite"/>
    </source>
</evidence>
<evidence type="ECO:0000269" key="4">
    <source>
    </source>
</evidence>
<evidence type="ECO:0000269" key="5">
    <source>
    </source>
</evidence>
<evidence type="ECO:0000269" key="6">
    <source>
    </source>
</evidence>
<evidence type="ECO:0000269" key="7">
    <source>
    </source>
</evidence>
<evidence type="ECO:0000269" key="8">
    <source>
    </source>
</evidence>
<evidence type="ECO:0000269" key="9">
    <source>
    </source>
</evidence>
<evidence type="ECO:0000303" key="10">
    <source>
    </source>
</evidence>
<evidence type="ECO:0000305" key="11"/>
<accession>P43120</accession>
<accession>Q544N6</accession>
<accession>Q9CRV1</accession>
<accession>Q9R1X2</accession>
<protein>
    <recommendedName>
        <fullName>Hematopoietically-expressed homeobox protein Hhex</fullName>
        <shortName>Homeobox protein HEX</shortName>
        <shortName>mHex</shortName>
    </recommendedName>
    <alternativeName>
        <fullName>Homeobox protein PRH</fullName>
    </alternativeName>
    <alternativeName>
        <fullName evidence="10">Proline-rich homeodomain protein</fullName>
    </alternativeName>
</protein>
<keyword id="KW-0963">Cytoplasm</keyword>
<keyword id="KW-0217">Developmental protein</keyword>
<keyword id="KW-0221">Differentiation</keyword>
<keyword id="KW-0238">DNA-binding</keyword>
<keyword id="KW-0371">Homeobox</keyword>
<keyword id="KW-0539">Nucleus</keyword>
<keyword id="KW-0597">Phosphoprotein</keyword>
<keyword id="KW-1185">Reference proteome</keyword>
<keyword id="KW-0678">Repressor</keyword>
<keyword id="KW-0804">Transcription</keyword>
<keyword id="KW-0805">Transcription regulation</keyword>
<keyword id="KW-0879">Wnt signaling pathway</keyword>
<name>HHEX_MOUSE</name>
<proteinExistence type="evidence at protein level"/>
<dbReference type="EMBL" id="Z21524">
    <property type="protein sequence ID" value="CAA79729.1"/>
    <property type="molecule type" value="Genomic_DNA"/>
</dbReference>
<dbReference type="EMBL" id="AB017132">
    <property type="protein sequence ID" value="BAA76714.1"/>
    <property type="molecule type" value="Genomic_DNA"/>
</dbReference>
<dbReference type="EMBL" id="AF132550">
    <property type="protein sequence ID" value="AAF04349.1"/>
    <property type="molecule type" value="Genomic_DNA"/>
</dbReference>
<dbReference type="EMBL" id="AK014111">
    <property type="protein sequence ID" value="BAB29163.1"/>
    <property type="status" value="ALT_FRAME"/>
    <property type="molecule type" value="mRNA"/>
</dbReference>
<dbReference type="EMBL" id="AK033664">
    <property type="protein sequence ID" value="BAC28416.1"/>
    <property type="molecule type" value="mRNA"/>
</dbReference>
<dbReference type="EMBL" id="BC057986">
    <property type="protein sequence ID" value="AAH57986.1"/>
    <property type="molecule type" value="mRNA"/>
</dbReference>
<dbReference type="CCDS" id="CCDS29778.1"/>
<dbReference type="PIR" id="S30230">
    <property type="entry name" value="S30230"/>
</dbReference>
<dbReference type="RefSeq" id="NP_032271.1">
    <property type="nucleotide sequence ID" value="NM_008245.3"/>
</dbReference>
<dbReference type="SMR" id="P43120"/>
<dbReference type="BioGRID" id="200297">
    <property type="interactions" value="8"/>
</dbReference>
<dbReference type="FunCoup" id="P43120">
    <property type="interactions" value="1032"/>
</dbReference>
<dbReference type="IntAct" id="P43120">
    <property type="interactions" value="2"/>
</dbReference>
<dbReference type="STRING" id="10090.ENSMUSP00000025944"/>
<dbReference type="GlyGen" id="P43120">
    <property type="glycosylation" value="2 sites"/>
</dbReference>
<dbReference type="iPTMnet" id="P43120"/>
<dbReference type="PhosphoSitePlus" id="P43120"/>
<dbReference type="PaxDb" id="10090-ENSMUSP00000025944"/>
<dbReference type="ProteomicsDB" id="273338"/>
<dbReference type="DNASU" id="15242"/>
<dbReference type="Ensembl" id="ENSMUST00000025944.9">
    <property type="protein sequence ID" value="ENSMUSP00000025944.3"/>
    <property type="gene ID" value="ENSMUSG00000024986.13"/>
</dbReference>
<dbReference type="GeneID" id="15242"/>
<dbReference type="KEGG" id="mmu:15242"/>
<dbReference type="UCSC" id="uc008hio.1">
    <property type="organism name" value="mouse"/>
</dbReference>
<dbReference type="AGR" id="MGI:96086"/>
<dbReference type="CTD" id="3087"/>
<dbReference type="MGI" id="MGI:96086">
    <property type="gene designation" value="Hhex"/>
</dbReference>
<dbReference type="VEuPathDB" id="HostDB:ENSMUSG00000024986"/>
<dbReference type="eggNOG" id="KOG0483">
    <property type="taxonomic scope" value="Eukaryota"/>
</dbReference>
<dbReference type="GeneTree" id="ENSGT00940000164435"/>
<dbReference type="HOGENOM" id="CLU_081944_0_0_1"/>
<dbReference type="InParanoid" id="P43120"/>
<dbReference type="OMA" id="FTGSFYP"/>
<dbReference type="OrthoDB" id="6159439at2759"/>
<dbReference type="PhylomeDB" id="P43120"/>
<dbReference type="TreeFam" id="TF325047"/>
<dbReference type="BioGRID-ORCS" id="15242">
    <property type="hits" value="2 hits in 76 CRISPR screens"/>
</dbReference>
<dbReference type="ChiTaRS" id="Ccdc39">
    <property type="organism name" value="mouse"/>
</dbReference>
<dbReference type="PRO" id="PR:P43120"/>
<dbReference type="Proteomes" id="UP000000589">
    <property type="component" value="Chromosome 19"/>
</dbReference>
<dbReference type="RNAct" id="P43120">
    <property type="molecule type" value="protein"/>
</dbReference>
<dbReference type="Bgee" id="ENSMUSG00000024986">
    <property type="expression patterns" value="Expressed in foregut-midgut junction and 143 other cell types or tissues"/>
</dbReference>
<dbReference type="ExpressionAtlas" id="P43120">
    <property type="expression patterns" value="baseline and differential"/>
</dbReference>
<dbReference type="GO" id="GO:0005737">
    <property type="term" value="C:cytoplasm"/>
    <property type="evidence" value="ECO:0000314"/>
    <property type="project" value="MGI"/>
</dbReference>
<dbReference type="GO" id="GO:0016604">
    <property type="term" value="C:nuclear body"/>
    <property type="evidence" value="ECO:0007669"/>
    <property type="project" value="UniProtKB-SubCell"/>
</dbReference>
<dbReference type="GO" id="GO:0005634">
    <property type="term" value="C:nucleus"/>
    <property type="evidence" value="ECO:0000314"/>
    <property type="project" value="MGI"/>
</dbReference>
<dbReference type="GO" id="GO:0003682">
    <property type="term" value="F:chromatin binding"/>
    <property type="evidence" value="ECO:0000314"/>
    <property type="project" value="MGI"/>
</dbReference>
<dbReference type="GO" id="GO:0001228">
    <property type="term" value="F:DNA-binding transcription activator activity, RNA polymerase II-specific"/>
    <property type="evidence" value="ECO:0000250"/>
    <property type="project" value="UniProtKB"/>
</dbReference>
<dbReference type="GO" id="GO:0003700">
    <property type="term" value="F:DNA-binding transcription factor activity"/>
    <property type="evidence" value="ECO:0000314"/>
    <property type="project" value="BHF-UCL"/>
</dbReference>
<dbReference type="GO" id="GO:0001227">
    <property type="term" value="F:DNA-binding transcription repressor activity, RNA polymerase II-specific"/>
    <property type="evidence" value="ECO:0000314"/>
    <property type="project" value="NTNU_SB"/>
</dbReference>
<dbReference type="GO" id="GO:0071837">
    <property type="term" value="F:HMG box domain binding"/>
    <property type="evidence" value="ECO:0000353"/>
    <property type="project" value="UniProtKB"/>
</dbReference>
<dbReference type="GO" id="GO:0000977">
    <property type="term" value="F:RNA polymerase II transcription regulatory region sequence-specific DNA binding"/>
    <property type="evidence" value="ECO:0000314"/>
    <property type="project" value="NTNU_SB"/>
</dbReference>
<dbReference type="GO" id="GO:0043565">
    <property type="term" value="F:sequence-specific DNA binding"/>
    <property type="evidence" value="ECO:0000250"/>
    <property type="project" value="UniProtKB"/>
</dbReference>
<dbReference type="GO" id="GO:0009887">
    <property type="term" value="P:animal organ morphogenesis"/>
    <property type="evidence" value="ECO:0000315"/>
    <property type="project" value="MGI"/>
</dbReference>
<dbReference type="GO" id="GO:0009952">
    <property type="term" value="P:anterior/posterior pattern specification"/>
    <property type="evidence" value="ECO:0000315"/>
    <property type="project" value="UniProtKB"/>
</dbReference>
<dbReference type="GO" id="GO:0030183">
    <property type="term" value="P:B cell differentiation"/>
    <property type="evidence" value="ECO:0000315"/>
    <property type="project" value="BHF-UCL"/>
</dbReference>
<dbReference type="GO" id="GO:0061009">
    <property type="term" value="P:common bile duct development"/>
    <property type="evidence" value="ECO:0000315"/>
    <property type="project" value="MGI"/>
</dbReference>
<dbReference type="GO" id="GO:0035050">
    <property type="term" value="P:embryonic heart tube development"/>
    <property type="evidence" value="ECO:0000315"/>
    <property type="project" value="MGI"/>
</dbReference>
<dbReference type="GO" id="GO:0048568">
    <property type="term" value="P:embryonic organ development"/>
    <property type="evidence" value="ECO:0000315"/>
    <property type="project" value="MGI"/>
</dbReference>
<dbReference type="GO" id="GO:0007492">
    <property type="term" value="P:endoderm development"/>
    <property type="evidence" value="ECO:0000315"/>
    <property type="project" value="MGI"/>
</dbReference>
<dbReference type="GO" id="GO:0030900">
    <property type="term" value="P:forebrain development"/>
    <property type="evidence" value="ECO:0000315"/>
    <property type="project" value="MGI"/>
</dbReference>
<dbReference type="GO" id="GO:0048853">
    <property type="term" value="P:forebrain morphogenesis"/>
    <property type="evidence" value="ECO:0000315"/>
    <property type="project" value="MGI"/>
</dbReference>
<dbReference type="GO" id="GO:0061010">
    <property type="term" value="P:gallbladder development"/>
    <property type="evidence" value="ECO:0000315"/>
    <property type="project" value="MGI"/>
</dbReference>
<dbReference type="GO" id="GO:0030097">
    <property type="term" value="P:hemopoiesis"/>
    <property type="evidence" value="ECO:0000315"/>
    <property type="project" value="MGI"/>
</dbReference>
<dbReference type="GO" id="GO:0061011">
    <property type="term" value="P:hepatic duct development"/>
    <property type="evidence" value="ECO:0000315"/>
    <property type="project" value="MGI"/>
</dbReference>
<dbReference type="GO" id="GO:0061017">
    <property type="term" value="P:hepatoblast differentiation"/>
    <property type="evidence" value="ECO:0000315"/>
    <property type="project" value="MGI"/>
</dbReference>
<dbReference type="GO" id="GO:0070365">
    <property type="term" value="P:hepatocyte differentiation"/>
    <property type="evidence" value="ECO:0000315"/>
    <property type="project" value="MGI"/>
</dbReference>
<dbReference type="GO" id="GO:0001701">
    <property type="term" value="P:in utero embryonic development"/>
    <property type="evidence" value="ECO:0000315"/>
    <property type="project" value="MGI"/>
</dbReference>
<dbReference type="GO" id="GO:0022027">
    <property type="term" value="P:interkinetic nuclear migration"/>
    <property type="evidence" value="ECO:0000315"/>
    <property type="project" value="MGI"/>
</dbReference>
<dbReference type="GO" id="GO:0001889">
    <property type="term" value="P:liver development"/>
    <property type="evidence" value="ECO:0000315"/>
    <property type="project" value="MGI"/>
</dbReference>
<dbReference type="GO" id="GO:0002009">
    <property type="term" value="P:morphogenesis of an epithelium"/>
    <property type="evidence" value="ECO:0000315"/>
    <property type="project" value="MGI"/>
</dbReference>
<dbReference type="GO" id="GO:0035264">
    <property type="term" value="P:multicellular organism growth"/>
    <property type="evidence" value="ECO:0000315"/>
    <property type="project" value="MGI"/>
</dbReference>
<dbReference type="GO" id="GO:0002573">
    <property type="term" value="P:myeloid leukocyte differentiation"/>
    <property type="evidence" value="ECO:0000315"/>
    <property type="project" value="MGI"/>
</dbReference>
<dbReference type="GO" id="GO:0016525">
    <property type="term" value="P:negative regulation of angiogenesis"/>
    <property type="evidence" value="ECO:0000314"/>
    <property type="project" value="BHF-UCL"/>
</dbReference>
<dbReference type="GO" id="GO:0045892">
    <property type="term" value="P:negative regulation of DNA-templated transcription"/>
    <property type="evidence" value="ECO:0000314"/>
    <property type="project" value="UniProtKB"/>
</dbReference>
<dbReference type="GO" id="GO:0000122">
    <property type="term" value="P:negative regulation of transcription by RNA polymerase II"/>
    <property type="evidence" value="ECO:0000314"/>
    <property type="project" value="UniProtKB"/>
</dbReference>
<dbReference type="GO" id="GO:0030948">
    <property type="term" value="P:negative regulation of vascular endothelial growth factor receptor signaling pathway"/>
    <property type="evidence" value="ECO:0000314"/>
    <property type="project" value="BHF-UCL"/>
</dbReference>
<dbReference type="GO" id="GO:0007219">
    <property type="term" value="P:Notch signaling pathway"/>
    <property type="evidence" value="ECO:0000314"/>
    <property type="project" value="MGI"/>
</dbReference>
<dbReference type="GO" id="GO:0031016">
    <property type="term" value="P:pancreas development"/>
    <property type="evidence" value="ECO:0000315"/>
    <property type="project" value="MGI"/>
</dbReference>
<dbReference type="GO" id="GO:0090263">
    <property type="term" value="P:positive regulation of canonical Wnt signaling pathway"/>
    <property type="evidence" value="ECO:0000250"/>
    <property type="project" value="UniProtKB"/>
</dbReference>
<dbReference type="GO" id="GO:0045893">
    <property type="term" value="P:positive regulation of DNA-templated transcription"/>
    <property type="evidence" value="ECO:0000250"/>
    <property type="project" value="UniProtKB"/>
</dbReference>
<dbReference type="GO" id="GO:0045944">
    <property type="term" value="P:positive regulation of transcription by RNA polymerase II"/>
    <property type="evidence" value="ECO:0000250"/>
    <property type="project" value="UniProtKB"/>
</dbReference>
<dbReference type="GO" id="GO:0030177">
    <property type="term" value="P:positive regulation of Wnt signaling pathway"/>
    <property type="evidence" value="ECO:0000315"/>
    <property type="project" value="UniProtKB"/>
</dbReference>
<dbReference type="GO" id="GO:0060431">
    <property type="term" value="P:primary lung bud formation"/>
    <property type="evidence" value="ECO:0000315"/>
    <property type="project" value="MGI"/>
</dbReference>
<dbReference type="GO" id="GO:0090009">
    <property type="term" value="P:primitive streak formation"/>
    <property type="evidence" value="ECO:0000315"/>
    <property type="project" value="MGI"/>
</dbReference>
<dbReference type="GO" id="GO:0042127">
    <property type="term" value="P:regulation of cell population proliferation"/>
    <property type="evidence" value="ECO:0000315"/>
    <property type="project" value="MGI"/>
</dbReference>
<dbReference type="GO" id="GO:0006357">
    <property type="term" value="P:regulation of transcription by RNA polymerase II"/>
    <property type="evidence" value="ECO:0000315"/>
    <property type="project" value="MGI"/>
</dbReference>
<dbReference type="GO" id="GO:0043434">
    <property type="term" value="P:response to peptide hormone"/>
    <property type="evidence" value="ECO:0007669"/>
    <property type="project" value="Ensembl"/>
</dbReference>
<dbReference type="GO" id="GO:0007165">
    <property type="term" value="P:signal transduction"/>
    <property type="evidence" value="ECO:0000315"/>
    <property type="project" value="MGI"/>
</dbReference>
<dbReference type="GO" id="GO:0030878">
    <property type="term" value="P:thyroid gland development"/>
    <property type="evidence" value="ECO:0000315"/>
    <property type="project" value="MGI"/>
</dbReference>
<dbReference type="GO" id="GO:0048729">
    <property type="term" value="P:tissue morphogenesis"/>
    <property type="evidence" value="ECO:0000315"/>
    <property type="project" value="MGI"/>
</dbReference>
<dbReference type="GO" id="GO:0001570">
    <property type="term" value="P:vasculogenesis"/>
    <property type="evidence" value="ECO:0000315"/>
    <property type="project" value="MGI"/>
</dbReference>
<dbReference type="GO" id="GO:0016055">
    <property type="term" value="P:Wnt signaling pathway"/>
    <property type="evidence" value="ECO:0007669"/>
    <property type="project" value="UniProtKB-KW"/>
</dbReference>
<dbReference type="CDD" id="cd00086">
    <property type="entry name" value="homeodomain"/>
    <property type="match status" value="1"/>
</dbReference>
<dbReference type="FunFam" id="1.10.10.60:FF:000178">
    <property type="entry name" value="hematopoietically-expressed homeobox protein HHEX"/>
    <property type="match status" value="1"/>
</dbReference>
<dbReference type="Gene3D" id="1.10.10.60">
    <property type="entry name" value="Homeodomain-like"/>
    <property type="match status" value="1"/>
</dbReference>
<dbReference type="InterPro" id="IPR001356">
    <property type="entry name" value="HD"/>
</dbReference>
<dbReference type="InterPro" id="IPR020479">
    <property type="entry name" value="HD_metazoa"/>
</dbReference>
<dbReference type="InterPro" id="IPR017970">
    <property type="entry name" value="Homeobox_CS"/>
</dbReference>
<dbReference type="InterPro" id="IPR051000">
    <property type="entry name" value="Homeobox_DNA-bind_prot"/>
</dbReference>
<dbReference type="InterPro" id="IPR009057">
    <property type="entry name" value="Homeodomain-like_sf"/>
</dbReference>
<dbReference type="PANTHER" id="PTHR24324:SF5">
    <property type="entry name" value="HEMATOPOIETICALLY-EXPRESSED HOMEOBOX PROTEIN HHEX"/>
    <property type="match status" value="1"/>
</dbReference>
<dbReference type="PANTHER" id="PTHR24324">
    <property type="entry name" value="HOMEOBOX PROTEIN HHEX"/>
    <property type="match status" value="1"/>
</dbReference>
<dbReference type="Pfam" id="PF00046">
    <property type="entry name" value="Homeodomain"/>
    <property type="match status" value="1"/>
</dbReference>
<dbReference type="PRINTS" id="PR00024">
    <property type="entry name" value="HOMEOBOX"/>
</dbReference>
<dbReference type="SMART" id="SM00389">
    <property type="entry name" value="HOX"/>
    <property type="match status" value="1"/>
</dbReference>
<dbReference type="SUPFAM" id="SSF46689">
    <property type="entry name" value="Homeodomain-like"/>
    <property type="match status" value="1"/>
</dbReference>
<dbReference type="PROSITE" id="PS00027">
    <property type="entry name" value="HOMEOBOX_1"/>
    <property type="match status" value="1"/>
</dbReference>
<dbReference type="PROSITE" id="PS50071">
    <property type="entry name" value="HOMEOBOX_2"/>
    <property type="match status" value="1"/>
</dbReference>
<reference key="1">
    <citation type="journal article" date="1993" name="Nucleic Acids Res.">
        <title>HEX: a novel homeobox gene expressed during haematopoiesis and conserved between mouse and human.</title>
        <authorList>
            <person name="Bedford F.K."/>
            <person name="Ashworth A."/>
            <person name="Enver T."/>
            <person name="Wiedemann L.M."/>
        </authorList>
    </citation>
    <scope>NUCLEOTIDE SEQUENCE [GENOMIC DNA]</scope>
    <scope>FUNCTION</scope>
    <scope>TISSUE SPECIFICITY</scope>
    <source>
        <strain>C57BL/6J</strain>
    </source>
</reference>
<reference key="2">
    <citation type="journal article" date="1999" name="J. Biochem.">
        <title>Genomic organization and promoter analysis of a mouse homeobox gene, Hex.</title>
        <authorList>
            <person name="Myint Z."/>
            <person name="Inazu T."/>
            <person name="Tanaka T."/>
            <person name="Yamada K."/>
            <person name="Keng V.W."/>
            <person name="Inoue Y."/>
            <person name="Kuriyama M."/>
            <person name="Noguchi T."/>
        </authorList>
    </citation>
    <scope>NUCLEOTIDE SEQUENCE [GENOMIC DNA]</scope>
    <source>
        <strain>129</strain>
    </source>
</reference>
<reference key="3">
    <citation type="journal article" date="1999" name="Mamm. Genome">
        <title>Genomic structure, cDNA mapping, and chromosomal localization of the mouse homeobox gene, Hex.</title>
        <authorList>
            <person name="Ghosh B."/>
            <person name="Jacobs H.C."/>
            <person name="Wiedemann L.M."/>
            <person name="Brown A."/>
            <person name="Bedford F.K."/>
            <person name="Nimmakayalu M.A."/>
            <person name="Ward D.C."/>
            <person name="Bogue C.W."/>
        </authorList>
    </citation>
    <scope>NUCLEOTIDE SEQUENCE [GENOMIC DNA]</scope>
    <source>
        <strain>129</strain>
    </source>
</reference>
<reference key="4">
    <citation type="journal article" date="2005" name="Science">
        <title>The transcriptional landscape of the mammalian genome.</title>
        <authorList>
            <person name="Carninci P."/>
            <person name="Kasukawa T."/>
            <person name="Katayama S."/>
            <person name="Gough J."/>
            <person name="Frith M.C."/>
            <person name="Maeda N."/>
            <person name="Oyama R."/>
            <person name="Ravasi T."/>
            <person name="Lenhard B."/>
            <person name="Wells C."/>
            <person name="Kodzius R."/>
            <person name="Shimokawa K."/>
            <person name="Bajic V.B."/>
            <person name="Brenner S.E."/>
            <person name="Batalov S."/>
            <person name="Forrest A.R."/>
            <person name="Zavolan M."/>
            <person name="Davis M.J."/>
            <person name="Wilming L.G."/>
            <person name="Aidinis V."/>
            <person name="Allen J.E."/>
            <person name="Ambesi-Impiombato A."/>
            <person name="Apweiler R."/>
            <person name="Aturaliya R.N."/>
            <person name="Bailey T.L."/>
            <person name="Bansal M."/>
            <person name="Baxter L."/>
            <person name="Beisel K.W."/>
            <person name="Bersano T."/>
            <person name="Bono H."/>
            <person name="Chalk A.M."/>
            <person name="Chiu K.P."/>
            <person name="Choudhary V."/>
            <person name="Christoffels A."/>
            <person name="Clutterbuck D.R."/>
            <person name="Crowe M.L."/>
            <person name="Dalla E."/>
            <person name="Dalrymple B.P."/>
            <person name="de Bono B."/>
            <person name="Della Gatta G."/>
            <person name="di Bernardo D."/>
            <person name="Down T."/>
            <person name="Engstrom P."/>
            <person name="Fagiolini M."/>
            <person name="Faulkner G."/>
            <person name="Fletcher C.F."/>
            <person name="Fukushima T."/>
            <person name="Furuno M."/>
            <person name="Futaki S."/>
            <person name="Gariboldi M."/>
            <person name="Georgii-Hemming P."/>
            <person name="Gingeras T.R."/>
            <person name="Gojobori T."/>
            <person name="Green R.E."/>
            <person name="Gustincich S."/>
            <person name="Harbers M."/>
            <person name="Hayashi Y."/>
            <person name="Hensch T.K."/>
            <person name="Hirokawa N."/>
            <person name="Hill D."/>
            <person name="Huminiecki L."/>
            <person name="Iacono M."/>
            <person name="Ikeo K."/>
            <person name="Iwama A."/>
            <person name="Ishikawa T."/>
            <person name="Jakt M."/>
            <person name="Kanapin A."/>
            <person name="Katoh M."/>
            <person name="Kawasawa Y."/>
            <person name="Kelso J."/>
            <person name="Kitamura H."/>
            <person name="Kitano H."/>
            <person name="Kollias G."/>
            <person name="Krishnan S.P."/>
            <person name="Kruger A."/>
            <person name="Kummerfeld S.K."/>
            <person name="Kurochkin I.V."/>
            <person name="Lareau L.F."/>
            <person name="Lazarevic D."/>
            <person name="Lipovich L."/>
            <person name="Liu J."/>
            <person name="Liuni S."/>
            <person name="McWilliam S."/>
            <person name="Madan Babu M."/>
            <person name="Madera M."/>
            <person name="Marchionni L."/>
            <person name="Matsuda H."/>
            <person name="Matsuzawa S."/>
            <person name="Miki H."/>
            <person name="Mignone F."/>
            <person name="Miyake S."/>
            <person name="Morris K."/>
            <person name="Mottagui-Tabar S."/>
            <person name="Mulder N."/>
            <person name="Nakano N."/>
            <person name="Nakauchi H."/>
            <person name="Ng P."/>
            <person name="Nilsson R."/>
            <person name="Nishiguchi S."/>
            <person name="Nishikawa S."/>
            <person name="Nori F."/>
            <person name="Ohara O."/>
            <person name="Okazaki Y."/>
            <person name="Orlando V."/>
            <person name="Pang K.C."/>
            <person name="Pavan W.J."/>
            <person name="Pavesi G."/>
            <person name="Pesole G."/>
            <person name="Petrovsky N."/>
            <person name="Piazza S."/>
            <person name="Reed J."/>
            <person name="Reid J.F."/>
            <person name="Ring B.Z."/>
            <person name="Ringwald M."/>
            <person name="Rost B."/>
            <person name="Ruan Y."/>
            <person name="Salzberg S.L."/>
            <person name="Sandelin A."/>
            <person name="Schneider C."/>
            <person name="Schoenbach C."/>
            <person name="Sekiguchi K."/>
            <person name="Semple C.A."/>
            <person name="Seno S."/>
            <person name="Sessa L."/>
            <person name="Sheng Y."/>
            <person name="Shibata Y."/>
            <person name="Shimada H."/>
            <person name="Shimada K."/>
            <person name="Silva D."/>
            <person name="Sinclair B."/>
            <person name="Sperling S."/>
            <person name="Stupka E."/>
            <person name="Sugiura K."/>
            <person name="Sultana R."/>
            <person name="Takenaka Y."/>
            <person name="Taki K."/>
            <person name="Tammoja K."/>
            <person name="Tan S.L."/>
            <person name="Tang S."/>
            <person name="Taylor M.S."/>
            <person name="Tegner J."/>
            <person name="Teichmann S.A."/>
            <person name="Ueda H.R."/>
            <person name="van Nimwegen E."/>
            <person name="Verardo R."/>
            <person name="Wei C.L."/>
            <person name="Yagi K."/>
            <person name="Yamanishi H."/>
            <person name="Zabarovsky E."/>
            <person name="Zhu S."/>
            <person name="Zimmer A."/>
            <person name="Hide W."/>
            <person name="Bult C."/>
            <person name="Grimmond S.M."/>
            <person name="Teasdale R.D."/>
            <person name="Liu E.T."/>
            <person name="Brusic V."/>
            <person name="Quackenbush J."/>
            <person name="Wahlestedt C."/>
            <person name="Mattick J.S."/>
            <person name="Hume D.A."/>
            <person name="Kai C."/>
            <person name="Sasaki D."/>
            <person name="Tomaru Y."/>
            <person name="Fukuda S."/>
            <person name="Kanamori-Katayama M."/>
            <person name="Suzuki M."/>
            <person name="Aoki J."/>
            <person name="Arakawa T."/>
            <person name="Iida J."/>
            <person name="Imamura K."/>
            <person name="Itoh M."/>
            <person name="Kato T."/>
            <person name="Kawaji H."/>
            <person name="Kawagashira N."/>
            <person name="Kawashima T."/>
            <person name="Kojima M."/>
            <person name="Kondo S."/>
            <person name="Konno H."/>
            <person name="Nakano K."/>
            <person name="Ninomiya N."/>
            <person name="Nishio T."/>
            <person name="Okada M."/>
            <person name="Plessy C."/>
            <person name="Shibata K."/>
            <person name="Shiraki T."/>
            <person name="Suzuki S."/>
            <person name="Tagami M."/>
            <person name="Waki K."/>
            <person name="Watahiki A."/>
            <person name="Okamura-Oho Y."/>
            <person name="Suzuki H."/>
            <person name="Kawai J."/>
            <person name="Hayashizaki Y."/>
        </authorList>
    </citation>
    <scope>NUCLEOTIDE SEQUENCE [LARGE SCALE MRNA]</scope>
    <source>
        <strain>C57BL/6J</strain>
        <tissue>Cecum</tissue>
        <tissue>Head</tissue>
    </source>
</reference>
<reference key="5">
    <citation type="journal article" date="2004" name="Genome Res.">
        <title>The status, quality, and expansion of the NIH full-length cDNA project: the Mammalian Gene Collection (MGC).</title>
        <authorList>
            <consortium name="The MGC Project Team"/>
        </authorList>
    </citation>
    <scope>NUCLEOTIDE SEQUENCE [LARGE SCALE MRNA]</scope>
    <source>
        <strain>FVB/N</strain>
        <tissue>Liver</tissue>
    </source>
</reference>
<reference key="6">
    <citation type="journal article" date="2000" name="Development">
        <title>Hex is a transcriptional repressor that contributes to anterior identity and suppresses Spemann organiser function.</title>
        <authorList>
            <person name="Brickman J.M."/>
            <person name="Jones C.M."/>
            <person name="Clements M."/>
            <person name="Smith J.C."/>
            <person name="Beddington R.S.P."/>
        </authorList>
    </citation>
    <scope>FUNCTION</scope>
</reference>
<reference key="7">
    <citation type="journal article" date="2003" name="EMBO J.">
        <title>The proline-rich homeodomain protein, PRH, is a tissue-specific inhibitor of eIF4E-dependent cyclin D1 mRNA transport and growth.</title>
        <authorList>
            <person name="Topisirovic I."/>
            <person name="Culjkovic B."/>
            <person name="Cohen N."/>
            <person name="Perez J.M."/>
            <person name="Skrabanek L."/>
            <person name="Borden K.L."/>
        </authorList>
    </citation>
    <scope>INTERACTION WITH EIF4E</scope>
</reference>
<reference key="8">
    <citation type="journal article" date="2006" name="Development">
        <title>Hex acts with beta-catenin to regulate anteroposterior patterning via a Groucho-related co-repressor and Nodal.</title>
        <authorList>
            <person name="Zamparini A.L."/>
            <person name="Watts T."/>
            <person name="Gardner C.E."/>
            <person name="Tomlinson S.R."/>
            <person name="Johnston G.I."/>
            <person name="Brickman J.M."/>
        </authorList>
    </citation>
    <scope>FUNCTION</scope>
</reference>
<reference key="9">
    <citation type="journal article" date="2010" name="J. Biol. Chem.">
        <title>Interaction between Hhex and SOX13 modulates Wnt/TCF activity.</title>
        <authorList>
            <person name="Marfil V."/>
            <person name="Moya M."/>
            <person name="Pierreux C.E."/>
            <person name="Castell J.V."/>
            <person name="Lemaigre F.P."/>
            <person name="Real F.X."/>
            <person name="Bort R."/>
        </authorList>
    </citation>
    <scope>INTERACTION WITH SOX13</scope>
</reference>
<reference key="10">
    <citation type="journal article" date="2013" name="Am. J. Pathol.">
        <title>Regulation of liver growth by glypican 3, CD81, hedgehog, and Hhex.</title>
        <authorList>
            <person name="Bhave V.S."/>
            <person name="Mars W."/>
            <person name="Donthamsetty S."/>
            <person name="Zhang X."/>
            <person name="Tan L."/>
            <person name="Luo J."/>
            <person name="Bowen W.C."/>
            <person name="Michalopoulos G.K."/>
        </authorList>
    </citation>
    <scope>INTERACTION WITH CD81</scope>
    <scope>SUBCELLULAR LOCATION</scope>
</reference>
<comment type="function">
    <text evidence="1 4 6 9">Recognizes the DNA sequence 5'-ATTAA-3' (PubMed:10804173). Transcriptional repressor (PubMed:10804173). Activator of WNT-mediated transcription in conjunction with CTNNB1 (PubMed:16936074). Establishes anterior identity at two levels; acts early to enhance canonical WNT-signaling by repressing expression of TLE4, and acts later to inhibit NODAL-signaling by directly targeting NODAL (PubMed:16936074). Inhibits EIF4E-mediated mRNA nuclear export (By similarity). May play a role in hematopoietic differentiation (PubMed:8096636).</text>
</comment>
<comment type="subunit">
    <text evidence="5 7 8">Interacts with CD81; the interaction prevents nuclear translocation of HHEX (PubMed:23665349). Interacts (via N-terminus) with SOX13; abolishes the SOX13-mediated inhibition of WNT-mediated transcriptional activity via competitive inhibition of the SOX13-TCF7 complex (PubMed:20028982). Interacts with EIF4E; the interaction inhibits EIF4E-mediated mRNA nuclear export (PubMed:12554669).</text>
</comment>
<comment type="subcellular location">
    <subcellularLocation>
        <location evidence="8">Nucleus</location>
    </subcellularLocation>
    <subcellularLocation>
        <location evidence="1">Nucleus</location>
        <location evidence="1">Nuclear body</location>
    </subcellularLocation>
    <subcellularLocation>
        <location evidence="1">Cytoplasm</location>
    </subcellularLocation>
</comment>
<comment type="developmental stage">
    <text>Expressed during hematopoiesis.</text>
</comment>
<comment type="sequence caution" evidence="11">
    <conflict type="frameshift">
        <sequence resource="EMBL-CDS" id="BAB29163"/>
    </conflict>
</comment>
<gene>
    <name type="primary">Hhex</name>
    <name type="synonym">Prh</name>
    <name type="synonym">Prhx</name>
</gene>
<organism>
    <name type="scientific">Mus musculus</name>
    <name type="common">Mouse</name>
    <dbReference type="NCBI Taxonomy" id="10090"/>
    <lineage>
        <taxon>Eukaryota</taxon>
        <taxon>Metazoa</taxon>
        <taxon>Chordata</taxon>
        <taxon>Craniata</taxon>
        <taxon>Vertebrata</taxon>
        <taxon>Euteleostomi</taxon>
        <taxon>Mammalia</taxon>
        <taxon>Eutheria</taxon>
        <taxon>Euarchontoglires</taxon>
        <taxon>Glires</taxon>
        <taxon>Rodentia</taxon>
        <taxon>Myomorpha</taxon>
        <taxon>Muroidea</taxon>
        <taxon>Muridae</taxon>
        <taxon>Murinae</taxon>
        <taxon>Mus</taxon>
        <taxon>Mus</taxon>
    </lineage>
</organism>
<feature type="chain" id="PRO_0000049075" description="Hematopoietically-expressed homeobox protein Hhex">
    <location>
        <begin position="1"/>
        <end position="271"/>
    </location>
</feature>
<feature type="DNA-binding region" description="Homeobox" evidence="2">
    <location>
        <begin position="138"/>
        <end position="197"/>
    </location>
</feature>
<feature type="region of interest" description="Interaction with SOX13" evidence="1">
    <location>
        <begin position="1"/>
        <end position="138"/>
    </location>
</feature>
<feature type="region of interest" description="Required for WNT signaling induction" evidence="1">
    <location>
        <begin position="138"/>
        <end position="271"/>
    </location>
</feature>
<feature type="region of interest" description="Disordered" evidence="3">
    <location>
        <begin position="195"/>
        <end position="271"/>
    </location>
</feature>
<feature type="compositionally biased region" description="Polar residues" evidence="3">
    <location>
        <begin position="212"/>
        <end position="242"/>
    </location>
</feature>
<feature type="compositionally biased region" description="Acidic residues" evidence="3">
    <location>
        <begin position="245"/>
        <end position="261"/>
    </location>
</feature>
<feature type="modified residue" description="Phosphoserine" evidence="1">
    <location>
        <position position="54"/>
    </location>
</feature>
<feature type="sequence conflict" description="In Ref. 4; BAB29163." evidence="11" ref="4">
    <original>A</original>
    <variation>L</variation>
    <location>
        <position position="10"/>
    </location>
</feature>
<feature type="sequence conflict" description="In Ref. 2; BAA76714." evidence="11" ref="2">
    <original>F</original>
    <variation>L</variation>
    <location>
        <position position="33"/>
    </location>
</feature>